<gene>
    <name evidence="1" type="primary">xerC</name>
    <name type="ordered locus">VP2981</name>
</gene>
<name>XERC_VIBPA</name>
<reference key="1">
    <citation type="journal article" date="2003" name="Lancet">
        <title>Genome sequence of Vibrio parahaemolyticus: a pathogenic mechanism distinct from that of V. cholerae.</title>
        <authorList>
            <person name="Makino K."/>
            <person name="Oshima K."/>
            <person name="Kurokawa K."/>
            <person name="Yokoyama K."/>
            <person name="Uda T."/>
            <person name="Tagomori K."/>
            <person name="Iijima Y."/>
            <person name="Najima M."/>
            <person name="Nakano M."/>
            <person name="Yamashita A."/>
            <person name="Kubota Y."/>
            <person name="Kimura S."/>
            <person name="Yasunaga T."/>
            <person name="Honda T."/>
            <person name="Shinagawa H."/>
            <person name="Hattori M."/>
            <person name="Iida T."/>
        </authorList>
    </citation>
    <scope>NUCLEOTIDE SEQUENCE [LARGE SCALE GENOMIC DNA]</scope>
    <source>
        <strain>RIMD 2210633</strain>
    </source>
</reference>
<proteinExistence type="inferred from homology"/>
<feature type="chain" id="PRO_1000070049" description="Tyrosine recombinase XerC">
    <location>
        <begin position="1"/>
        <end position="310"/>
    </location>
</feature>
<feature type="domain" description="Core-binding (CB)" evidence="3">
    <location>
        <begin position="11"/>
        <end position="97"/>
    </location>
</feature>
<feature type="domain" description="Tyr recombinase" evidence="2">
    <location>
        <begin position="118"/>
        <end position="298"/>
    </location>
</feature>
<feature type="active site" evidence="1">
    <location>
        <position position="157"/>
    </location>
</feature>
<feature type="active site" evidence="1">
    <location>
        <position position="181"/>
    </location>
</feature>
<feature type="active site" evidence="1">
    <location>
        <position position="250"/>
    </location>
</feature>
<feature type="active site" evidence="1">
    <location>
        <position position="253"/>
    </location>
</feature>
<feature type="active site" evidence="1">
    <location>
        <position position="276"/>
    </location>
</feature>
<feature type="active site" description="O-(3'-phospho-DNA)-tyrosine intermediate" evidence="1">
    <location>
        <position position="285"/>
    </location>
</feature>
<evidence type="ECO:0000255" key="1">
    <source>
        <dbReference type="HAMAP-Rule" id="MF_01808"/>
    </source>
</evidence>
<evidence type="ECO:0000255" key="2">
    <source>
        <dbReference type="PROSITE-ProRule" id="PRU01246"/>
    </source>
</evidence>
<evidence type="ECO:0000255" key="3">
    <source>
        <dbReference type="PROSITE-ProRule" id="PRU01248"/>
    </source>
</evidence>
<organism>
    <name type="scientific">Vibrio parahaemolyticus serotype O3:K6 (strain RIMD 2210633)</name>
    <dbReference type="NCBI Taxonomy" id="223926"/>
    <lineage>
        <taxon>Bacteria</taxon>
        <taxon>Pseudomonadati</taxon>
        <taxon>Pseudomonadota</taxon>
        <taxon>Gammaproteobacteria</taxon>
        <taxon>Vibrionales</taxon>
        <taxon>Vibrionaceae</taxon>
        <taxon>Vibrio</taxon>
    </lineage>
</organism>
<keyword id="KW-0131">Cell cycle</keyword>
<keyword id="KW-0132">Cell division</keyword>
<keyword id="KW-0159">Chromosome partition</keyword>
<keyword id="KW-0963">Cytoplasm</keyword>
<keyword id="KW-0229">DNA integration</keyword>
<keyword id="KW-0233">DNA recombination</keyword>
<keyword id="KW-0238">DNA-binding</keyword>
<accession>Q87KJ6</accession>
<sequence length="310" mass="35055">MTTTPNTPLPNSLQKPLERFYEFLRSEKGLSLHTQRNYKQQLETMAQHLAEMGLKDWSQVDAGWVRQLAGKGMREGMKASSLATRLSSLRSFFDFLILRGEMSANPAKGVSAPRKKRPLPKNLDVDEVNQLLEVNEDDPLAIRDRAMMELMYGAGLRLAELVSVDVRDVQLRSGELRVIGKGDKERKVPFSGMATEWVGKWLRVRGDLAAPGEPALFVSKLGTRISHRSVQKRMAEWGQKQSVASHISPHKLRHSFATHMLESSNNLRAVQELLGHENISTTQIYTHLDFQHLAQAYDQAHPRARKKNGE</sequence>
<protein>
    <recommendedName>
        <fullName evidence="1">Tyrosine recombinase XerC</fullName>
    </recommendedName>
</protein>
<comment type="function">
    <text evidence="1">Site-specific tyrosine recombinase, which acts by catalyzing the cutting and rejoining of the recombining DNA molecules. The XerC-XerD complex is essential to convert dimers of the bacterial chromosome into monomers to permit their segregation at cell division. It also contributes to the segregational stability of plasmids.</text>
</comment>
<comment type="subunit">
    <text evidence="1">Forms a cyclic heterotetrameric complex composed of two molecules of XerC and two molecules of XerD.</text>
</comment>
<comment type="subcellular location">
    <subcellularLocation>
        <location evidence="1">Cytoplasm</location>
    </subcellularLocation>
</comment>
<comment type="similarity">
    <text evidence="1">Belongs to the 'phage' integrase family. XerC subfamily.</text>
</comment>
<dbReference type="EMBL" id="BA000031">
    <property type="protein sequence ID" value="BAC61244.1"/>
    <property type="molecule type" value="Genomic_DNA"/>
</dbReference>
<dbReference type="RefSeq" id="NP_799360.1">
    <property type="nucleotide sequence ID" value="NC_004603.1"/>
</dbReference>
<dbReference type="RefSeq" id="WP_005459099.1">
    <property type="nucleotide sequence ID" value="NC_004603.1"/>
</dbReference>
<dbReference type="SMR" id="Q87KJ6"/>
<dbReference type="GeneID" id="1190567"/>
<dbReference type="KEGG" id="vpa:VP2981"/>
<dbReference type="PATRIC" id="fig|223926.6.peg.2869"/>
<dbReference type="eggNOG" id="COG4973">
    <property type="taxonomic scope" value="Bacteria"/>
</dbReference>
<dbReference type="HOGENOM" id="CLU_027562_9_0_6"/>
<dbReference type="Proteomes" id="UP000002493">
    <property type="component" value="Chromosome 1"/>
</dbReference>
<dbReference type="GO" id="GO:0005737">
    <property type="term" value="C:cytoplasm"/>
    <property type="evidence" value="ECO:0007669"/>
    <property type="project" value="UniProtKB-SubCell"/>
</dbReference>
<dbReference type="GO" id="GO:0003677">
    <property type="term" value="F:DNA binding"/>
    <property type="evidence" value="ECO:0007669"/>
    <property type="project" value="UniProtKB-KW"/>
</dbReference>
<dbReference type="GO" id="GO:0009037">
    <property type="term" value="F:tyrosine-based site-specific recombinase activity"/>
    <property type="evidence" value="ECO:0007669"/>
    <property type="project" value="UniProtKB-UniRule"/>
</dbReference>
<dbReference type="GO" id="GO:0051301">
    <property type="term" value="P:cell division"/>
    <property type="evidence" value="ECO:0007669"/>
    <property type="project" value="UniProtKB-KW"/>
</dbReference>
<dbReference type="GO" id="GO:0007059">
    <property type="term" value="P:chromosome segregation"/>
    <property type="evidence" value="ECO:0007669"/>
    <property type="project" value="UniProtKB-UniRule"/>
</dbReference>
<dbReference type="GO" id="GO:0006313">
    <property type="term" value="P:DNA transposition"/>
    <property type="evidence" value="ECO:0007669"/>
    <property type="project" value="UniProtKB-UniRule"/>
</dbReference>
<dbReference type="CDD" id="cd00798">
    <property type="entry name" value="INT_XerDC_C"/>
    <property type="match status" value="1"/>
</dbReference>
<dbReference type="FunFam" id="1.10.443.10:FF:000002">
    <property type="entry name" value="Tyrosine recombinase XerC"/>
    <property type="match status" value="1"/>
</dbReference>
<dbReference type="Gene3D" id="1.10.150.130">
    <property type="match status" value="1"/>
</dbReference>
<dbReference type="Gene3D" id="1.10.443.10">
    <property type="entry name" value="Intergrase catalytic core"/>
    <property type="match status" value="1"/>
</dbReference>
<dbReference type="HAMAP" id="MF_01808">
    <property type="entry name" value="Recomb_XerC_XerD"/>
    <property type="match status" value="1"/>
</dbReference>
<dbReference type="InterPro" id="IPR044068">
    <property type="entry name" value="CB"/>
</dbReference>
<dbReference type="InterPro" id="IPR011010">
    <property type="entry name" value="DNA_brk_join_enz"/>
</dbReference>
<dbReference type="InterPro" id="IPR013762">
    <property type="entry name" value="Integrase-like_cat_sf"/>
</dbReference>
<dbReference type="InterPro" id="IPR002104">
    <property type="entry name" value="Integrase_catalytic"/>
</dbReference>
<dbReference type="InterPro" id="IPR010998">
    <property type="entry name" value="Integrase_recombinase_N"/>
</dbReference>
<dbReference type="InterPro" id="IPR004107">
    <property type="entry name" value="Integrase_SAM-like_N"/>
</dbReference>
<dbReference type="InterPro" id="IPR011931">
    <property type="entry name" value="Recomb_XerC"/>
</dbReference>
<dbReference type="InterPro" id="IPR023009">
    <property type="entry name" value="Tyrosine_recombinase_XerC/XerD"/>
</dbReference>
<dbReference type="InterPro" id="IPR050090">
    <property type="entry name" value="Tyrosine_recombinase_XerCD"/>
</dbReference>
<dbReference type="NCBIfam" id="NF001399">
    <property type="entry name" value="PRK00283.1"/>
    <property type="match status" value="1"/>
</dbReference>
<dbReference type="NCBIfam" id="TIGR02224">
    <property type="entry name" value="recomb_XerC"/>
    <property type="match status" value="1"/>
</dbReference>
<dbReference type="PANTHER" id="PTHR30349">
    <property type="entry name" value="PHAGE INTEGRASE-RELATED"/>
    <property type="match status" value="1"/>
</dbReference>
<dbReference type="PANTHER" id="PTHR30349:SF81">
    <property type="entry name" value="TYROSINE RECOMBINASE XERC"/>
    <property type="match status" value="1"/>
</dbReference>
<dbReference type="Pfam" id="PF02899">
    <property type="entry name" value="Phage_int_SAM_1"/>
    <property type="match status" value="1"/>
</dbReference>
<dbReference type="Pfam" id="PF00589">
    <property type="entry name" value="Phage_integrase"/>
    <property type="match status" value="1"/>
</dbReference>
<dbReference type="SUPFAM" id="SSF56349">
    <property type="entry name" value="DNA breaking-rejoining enzymes"/>
    <property type="match status" value="1"/>
</dbReference>
<dbReference type="SUPFAM" id="SSF47823">
    <property type="entry name" value="lambda integrase-like, N-terminal domain"/>
    <property type="match status" value="1"/>
</dbReference>
<dbReference type="PROSITE" id="PS51900">
    <property type="entry name" value="CB"/>
    <property type="match status" value="1"/>
</dbReference>
<dbReference type="PROSITE" id="PS51898">
    <property type="entry name" value="TYR_RECOMBINASE"/>
    <property type="match status" value="1"/>
</dbReference>